<comment type="function">
    <text evidence="3">Acts as a component of the WASH core complex that functions as a nucleation-promoting factor (NPF) at the surface of endosomes, where it recruits and activates the Arp2/3 complex to induce actin polymerization, playing a key role in the fission of tubules that serve as transport intermediates during endosome sorting. Mediates the recruitment of the WASH core complex to endosome membranes via binding to phospholipids and VPS35 of the retromer CSC. Mediates the recruitment of the F-actin-capping protein dimer to the WASH core complex probably promoting localized F-actin polymerization needed for vesicle scission. Via its C-terminus binds various phospholipids, most strongly phosphatidylinositol 4-phosphate (PtdIns-(4)P), phosphatidylinositol 5-phosphate (PtdIns-(5)P) and phosphatidylinositol 3,5-bisphosphate (PtdIns-(3,5)P2). Involved in the endosome-to-plasma membrane trafficking and recycling of SNX27-retromer-dependent cargo proteins, such as GLUT1. Required for the association of DNAJC13, ENTR1, ANKRD50 with retromer CSC subunit VPS35. Required for the endosomal recruitment of CCC and retriever complexes subunits COMMD1 and CCDC93 as well as the retrievere complex subunit VPS35L.</text>
</comment>
<comment type="subunit">
    <text evidence="1 3">Component of the WASH core complex also described as WASH regulatory complex (SHRC) composed of WASHC1, WASHC2, WASHC3, WASHC4 and WASHC5; in the complex interacts (via N-terminus) directly with WASHC1. The WASH core complex associates with the F-actin-capping protein dimer (formed by CAPZA1, CAPZA2 or CAPZA3 and CAPZB) in a transient or substoichiometric manner which was initially described as WASH complex. Interacts with VPS35; mediates the association with the retromer CSC complex. Interacts with FKBP15. Interacts with CCDC93, CCDC22, VPS35L; indicative for an association of the WASH core complex with the CCC and retriever complexes (By similarity). Directly interacts with TBC1D23 (By similarity).</text>
</comment>
<comment type="subcellular location">
    <subcellularLocation>
        <location evidence="3">Early endosome membrane</location>
    </subcellularLocation>
    <subcellularLocation>
        <location evidence="3">Cell membrane</location>
    </subcellularLocation>
</comment>
<comment type="domain">
    <text evidence="3">The LFa (leucine-phenylalanine-acidic) motif bind directly to VPS35 of retromer CSC; adjacent motifs can act cooperatively to bind multiple CSCs, although there is significant variability in the affinities of different motifs for retromer.</text>
</comment>
<comment type="similarity">
    <text evidence="5">Belongs to the FAM21 family.</text>
</comment>
<sequence>MNRTSPDSEQPPASEPVWERPWSVEEIRRSSQNWSLAADAGLLQFLQEFSQQTISRTHEIKKQVDGLIQETKATHCRLHNVFNDFLMLSNTQFIENRVYDEEVEDQALKTEAEKAEQEKTREQKEIDLIPKVQEAVNYGLQVLDSAFEQLDIKAGNSDSEEEDANERVELILEPKDLYIDRPLPYLIGSKLFMEQEDVGLGELSSEEGSVGSDRGSIVDSEDEKEEEESDDFASHSDNEQNQHITQMSDEEEDDDADLFADSEKEGDDIEDIEESAKSKRPTSFADELAARIKGDVSNQRKEGHTDGKPQRTVKEKKERRTPADDEEDILFPPPTLTDEDFSPFGSRGGLFSDRQGLFDDDDESDLFKEAPRGQPAQGPVSEESPPSPKPGKKIPAGAVSVFLGYTDVSGSTSAPSLKEFQKHEQSTPGKSPHLPAPTGLFDDDDNDSDEDDNFFMPSSSKPSKTDKVKPTTIIFDDDEGDLFKEKTTALPAASVSQTDENKARTDKTITLPSSKNPKLVSETKTQKGLFSDEEDSEDLFSSQSSSKTKSASVLSSQPPASVSLFGDEDEEDNLFGSAAAKKQTSSLPPQSQEKAKPSEQPPKKASALFSSDEEDQWSVADSQTKLASERKSKGERWDAGTNQGQEAKAVKKTNLFEEEDDDGVDLFAIAKDSQKKTQRTSLLFEDDTDSGSSLFSLPPTSVPPAATKKESIPKVPLLFSDEEDSEVPSGVKPVDLKAENAAASPEVGSADVANVAQKEGLLPTSDQEAGGPSDIFSSSSPLDKGAKGRTKTVLSLFDEDEDKVEDDSNTCAPQGGLEKGVKTDRRPKSTGVFQDEELLFSHKLQKDNDPDVDLFAGTKKTRLSMPSGGSLFGDDDDDDLFSTAKTQPAQPVVPEKKGTLRKDHKPPELTEGSKEKSTWKAETAQDSSGLTPFKSREPSSRIGKIQANLAINPATLLPSVAPQIPGAKPASCELAFPSSEPARSHIREAVPTLPGSEEAGVSFDLPAQADTLHSANKGRVKVRGKRRPQTRAARRLAAQESSEAEDVTIDRGPVTQLSSSPVLPNGHQPLLQPRMASGETSSEKAMAVPWEGGPVLSAVDRSFFVKSLPQTGNEAHLFDSGDIFPKSTGSQSMEGASVKAGETPAHSSAGRKEKSLVFPDLSEASGVDDLFQSAKPRPTKKRNPFPLLEDEEDLFADQKGKKNQWKSDSHQDVVSKTQDIFEDDIFATEAIKKPFPKKREKERTLEPNLFDDNIDIFADLTVKPKEKPKKKVTAKSMFDDDTDDIFSSGLQAKASKPKSQSAEAVSELRSENKVSNIFDDPLNAFGSQ</sequence>
<keyword id="KW-1003">Cell membrane</keyword>
<keyword id="KW-0967">Endosome</keyword>
<keyword id="KW-0472">Membrane</keyword>
<keyword id="KW-0597">Phosphoprotein</keyword>
<keyword id="KW-1185">Reference proteome</keyword>
<keyword id="KW-0813">Transport</keyword>
<dbReference type="EMBL" id="AY257251">
    <property type="protein sequence ID" value="AAP31854.1"/>
    <property type="molecule type" value="mRNA"/>
</dbReference>
<dbReference type="RefSeq" id="NP_954677.1">
    <property type="nucleotide sequence ID" value="NM_199207.1"/>
</dbReference>
<dbReference type="SMR" id="Q80X08"/>
<dbReference type="FunCoup" id="Q80X08">
    <property type="interactions" value="1941"/>
</dbReference>
<dbReference type="STRING" id="10116.ENSRNOP00000015620"/>
<dbReference type="iPTMnet" id="Q80X08"/>
<dbReference type="PhosphoSitePlus" id="Q80X08"/>
<dbReference type="jPOST" id="Q80X08"/>
<dbReference type="PaxDb" id="10116-ENSRNOP00000015620"/>
<dbReference type="GeneID" id="297530"/>
<dbReference type="KEGG" id="rno:297530"/>
<dbReference type="UCSC" id="RGD:735230">
    <property type="organism name" value="rat"/>
</dbReference>
<dbReference type="AGR" id="RGD:735230"/>
<dbReference type="CTD" id="253725"/>
<dbReference type="RGD" id="735230">
    <property type="gene designation" value="Washc2c"/>
</dbReference>
<dbReference type="eggNOG" id="ENOG502QTIY">
    <property type="taxonomic scope" value="Eukaryota"/>
</dbReference>
<dbReference type="InParanoid" id="Q80X08"/>
<dbReference type="OrthoDB" id="751084at2759"/>
<dbReference type="PhylomeDB" id="Q80X08"/>
<dbReference type="PRO" id="PR:Q80X08"/>
<dbReference type="Proteomes" id="UP000002494">
    <property type="component" value="Unplaced"/>
</dbReference>
<dbReference type="GO" id="GO:0005829">
    <property type="term" value="C:cytosol"/>
    <property type="evidence" value="ECO:0007669"/>
    <property type="project" value="GOC"/>
</dbReference>
<dbReference type="GO" id="GO:0005769">
    <property type="term" value="C:early endosome"/>
    <property type="evidence" value="ECO:0000250"/>
    <property type="project" value="UniProtKB"/>
</dbReference>
<dbReference type="GO" id="GO:0031901">
    <property type="term" value="C:early endosome membrane"/>
    <property type="evidence" value="ECO:0007669"/>
    <property type="project" value="UniProtKB-SubCell"/>
</dbReference>
<dbReference type="GO" id="GO:0005768">
    <property type="term" value="C:endosome"/>
    <property type="evidence" value="ECO:0000266"/>
    <property type="project" value="RGD"/>
</dbReference>
<dbReference type="GO" id="GO:0005886">
    <property type="term" value="C:plasma membrane"/>
    <property type="evidence" value="ECO:0007669"/>
    <property type="project" value="UniProtKB-SubCell"/>
</dbReference>
<dbReference type="GO" id="GO:0071203">
    <property type="term" value="C:WASH complex"/>
    <property type="evidence" value="ECO:0000250"/>
    <property type="project" value="UniProtKB"/>
</dbReference>
<dbReference type="GO" id="GO:1901981">
    <property type="term" value="F:phosphatidylinositol phosphate binding"/>
    <property type="evidence" value="ECO:0000318"/>
    <property type="project" value="GO_Central"/>
</dbReference>
<dbReference type="GO" id="GO:0005547">
    <property type="term" value="F:phosphatidylinositol-3,4,5-trisphosphate binding"/>
    <property type="evidence" value="ECO:0000266"/>
    <property type="project" value="RGD"/>
</dbReference>
<dbReference type="GO" id="GO:0043325">
    <property type="term" value="F:phosphatidylinositol-3,4-bisphosphate binding"/>
    <property type="evidence" value="ECO:0000266"/>
    <property type="project" value="RGD"/>
</dbReference>
<dbReference type="GO" id="GO:0080025">
    <property type="term" value="F:phosphatidylinositol-3,5-bisphosphate binding"/>
    <property type="evidence" value="ECO:0000266"/>
    <property type="project" value="RGD"/>
</dbReference>
<dbReference type="GO" id="GO:0032266">
    <property type="term" value="F:phosphatidylinositol-3-phosphate binding"/>
    <property type="evidence" value="ECO:0000266"/>
    <property type="project" value="RGD"/>
</dbReference>
<dbReference type="GO" id="GO:0005546">
    <property type="term" value="F:phosphatidylinositol-4,5-bisphosphate binding"/>
    <property type="evidence" value="ECO:0000266"/>
    <property type="project" value="RGD"/>
</dbReference>
<dbReference type="GO" id="GO:0070273">
    <property type="term" value="F:phosphatidylinositol-4-phosphate binding"/>
    <property type="evidence" value="ECO:0000266"/>
    <property type="project" value="RGD"/>
</dbReference>
<dbReference type="GO" id="GO:0010314">
    <property type="term" value="F:phosphatidylinositol-5-phosphate binding"/>
    <property type="evidence" value="ECO:0000266"/>
    <property type="project" value="RGD"/>
</dbReference>
<dbReference type="GO" id="GO:1905394">
    <property type="term" value="F:retromer complex binding"/>
    <property type="evidence" value="ECO:0000266"/>
    <property type="project" value="RGD"/>
</dbReference>
<dbReference type="GO" id="GO:0032456">
    <property type="term" value="P:endocytic recycling"/>
    <property type="evidence" value="ECO:0000266"/>
    <property type="project" value="RGD"/>
</dbReference>
<dbReference type="GO" id="GO:2000813">
    <property type="term" value="P:negative regulation of barbed-end actin filament capping"/>
    <property type="evidence" value="ECO:0000266"/>
    <property type="project" value="RGD"/>
</dbReference>
<dbReference type="GO" id="GO:0036010">
    <property type="term" value="P:protein localization to endosome"/>
    <property type="evidence" value="ECO:0000250"/>
    <property type="project" value="UniProtKB"/>
</dbReference>
<dbReference type="GO" id="GO:1900024">
    <property type="term" value="P:regulation of substrate adhesion-dependent cell spreading"/>
    <property type="evidence" value="ECO:0000266"/>
    <property type="project" value="RGD"/>
</dbReference>
<dbReference type="GO" id="GO:0042147">
    <property type="term" value="P:retrograde transport, endosome to Golgi"/>
    <property type="evidence" value="ECO:0000250"/>
    <property type="project" value="UniProtKB"/>
</dbReference>
<dbReference type="InterPro" id="IPR029341">
    <property type="entry name" value="FAM21/CAPZIP"/>
</dbReference>
<dbReference type="PANTHER" id="PTHR21669">
    <property type="entry name" value="CAPZ-INTERACTING PROTEIN AND RELATED PROTEINS"/>
    <property type="match status" value="1"/>
</dbReference>
<dbReference type="PANTHER" id="PTHR21669:SF38">
    <property type="entry name" value="WASH COMPLEX SUBUNIT 2A-RELATED"/>
    <property type="match status" value="1"/>
</dbReference>
<dbReference type="Pfam" id="PF15255">
    <property type="entry name" value="CAP-ZIP_m"/>
    <property type="match status" value="1"/>
</dbReference>
<protein>
    <recommendedName>
        <fullName evidence="6">WASH complex subunit 2</fullName>
    </recommendedName>
</protein>
<evidence type="ECO:0000250" key="1">
    <source>
        <dbReference type="UniProtKB" id="Q641Q2"/>
    </source>
</evidence>
<evidence type="ECO:0000250" key="2">
    <source>
        <dbReference type="UniProtKB" id="Q6PGL7"/>
    </source>
</evidence>
<evidence type="ECO:0000250" key="3">
    <source>
        <dbReference type="UniProtKB" id="Q9Y4E1"/>
    </source>
</evidence>
<evidence type="ECO:0000256" key="4">
    <source>
        <dbReference type="SAM" id="MobiDB-lite"/>
    </source>
</evidence>
<evidence type="ECO:0000305" key="5"/>
<evidence type="ECO:0000312" key="6">
    <source>
        <dbReference type="RGD" id="735230"/>
    </source>
</evidence>
<evidence type="ECO:0007744" key="7">
    <source>
    </source>
</evidence>
<proteinExistence type="evidence at protein level"/>
<name>WASC2_RAT</name>
<gene>
    <name evidence="6" type="primary">Washc2</name>
    <name type="synonym">Fam21</name>
</gene>
<accession>Q80X08</accession>
<reference key="1">
    <citation type="submission" date="2003-03" db="EMBL/GenBank/DDBJ databases">
        <title>The isolation and sequencing of a novel rat brain cDNA.</title>
        <authorList>
            <person name="Majda B.T."/>
            <person name="Meloni B.P."/>
            <person name="Knuckey N.W."/>
        </authorList>
    </citation>
    <scope>NUCLEOTIDE SEQUENCE [MRNA]</scope>
    <source>
        <strain>Sprague-Dawley</strain>
        <tissue>Brain</tissue>
    </source>
</reference>
<reference key="2">
    <citation type="journal article" date="2012" name="Nat. Commun.">
        <title>Quantitative maps of protein phosphorylation sites across 14 different rat organs and tissues.</title>
        <authorList>
            <person name="Lundby A."/>
            <person name="Secher A."/>
            <person name="Lage K."/>
            <person name="Nordsborg N.B."/>
            <person name="Dmytriyev A."/>
            <person name="Lundby C."/>
            <person name="Olsen J.V."/>
        </authorList>
    </citation>
    <scope>PHOSPHORYLATION [LARGE SCALE ANALYSIS] AT SER-157; SER-159; SER-204; SER-205; SER-209; SER-384; SER-387; SER-531; SER-536; SER-610; SER-611; SER-720; SER-744; SER-780 AND SER-1060</scope>
    <scope>IDENTIFICATION BY MASS SPECTROMETRY [LARGE SCALE ANALYSIS]</scope>
</reference>
<organism>
    <name type="scientific">Rattus norvegicus</name>
    <name type="common">Rat</name>
    <dbReference type="NCBI Taxonomy" id="10116"/>
    <lineage>
        <taxon>Eukaryota</taxon>
        <taxon>Metazoa</taxon>
        <taxon>Chordata</taxon>
        <taxon>Craniata</taxon>
        <taxon>Vertebrata</taxon>
        <taxon>Euteleostomi</taxon>
        <taxon>Mammalia</taxon>
        <taxon>Eutheria</taxon>
        <taxon>Euarchontoglires</taxon>
        <taxon>Glires</taxon>
        <taxon>Rodentia</taxon>
        <taxon>Myomorpha</taxon>
        <taxon>Muroidea</taxon>
        <taxon>Muridae</taxon>
        <taxon>Murinae</taxon>
        <taxon>Rattus</taxon>
    </lineage>
</organism>
<feature type="chain" id="PRO_0000317434" description="WASH complex subunit 2">
    <location>
        <begin position="1"/>
        <end position="1328"/>
    </location>
</feature>
<feature type="region of interest" description="Sufficient for interaction with WASHC3, WASHC4 and WASHC5; required for interaction with WASHC1" evidence="3">
    <location>
        <begin position="1"/>
        <end position="219"/>
    </location>
</feature>
<feature type="region of interest" description="Disordered" evidence="4">
    <location>
        <begin position="201"/>
        <end position="655"/>
    </location>
</feature>
<feature type="region of interest" description="Sufficient for interaction with CCDC93" evidence="3">
    <location>
        <begin position="346"/>
        <end position="592"/>
    </location>
</feature>
<feature type="region of interest" description="Interaction with VPS35" evidence="3">
    <location>
        <begin position="347"/>
        <end position="1328"/>
    </location>
</feature>
<feature type="region of interest" description="Disordered" evidence="4">
    <location>
        <begin position="675"/>
        <end position="830"/>
    </location>
</feature>
<feature type="region of interest" description="Disordered" evidence="4">
    <location>
        <begin position="863"/>
        <end position="940"/>
    </location>
</feature>
<feature type="region of interest" description="Interaction with phospholipids" evidence="3">
    <location>
        <begin position="925"/>
        <end position="1328"/>
    </location>
</feature>
<feature type="region of interest" description="Disordered" evidence="4">
    <location>
        <begin position="991"/>
        <end position="1088"/>
    </location>
</feature>
<feature type="region of interest" description="Required for interaction with F-actin-capping protein subunit alpha (CAPZA1 or CAPZA2 or CAPZA3)" evidence="3">
    <location>
        <begin position="1017"/>
        <end position="1035"/>
    </location>
</feature>
<feature type="region of interest" description="Disordered" evidence="4">
    <location>
        <begin position="1115"/>
        <end position="1210"/>
    </location>
</feature>
<feature type="region of interest" description="Disordered" evidence="4">
    <location>
        <begin position="1289"/>
        <end position="1310"/>
    </location>
</feature>
<feature type="short sequence motif" description="LFa 1" evidence="3">
    <location>
        <begin position="357"/>
        <end position="367"/>
    </location>
</feature>
<feature type="short sequence motif" description="LFa 2" evidence="3">
    <location>
        <begin position="440"/>
        <end position="455"/>
    </location>
</feature>
<feature type="short sequence motif" description="LFa 3" evidence="3">
    <location>
        <begin position="474"/>
        <end position="483"/>
    </location>
</feature>
<feature type="short sequence motif" description="LFa 4" evidence="3">
    <location>
        <begin position="529"/>
        <end position="540"/>
    </location>
</feature>
<feature type="short sequence motif" description="LFa 5" evidence="3">
    <location>
        <begin position="564"/>
        <end position="575"/>
    </location>
</feature>
<feature type="short sequence motif" description="LFa 6" evidence="3">
    <location>
        <begin position="655"/>
        <end position="667"/>
    </location>
</feature>
<feature type="short sequence motif" description="LFa 7" evidence="3">
    <location>
        <begin position="683"/>
        <end position="695"/>
    </location>
</feature>
<feature type="short sequence motif" description="LFa 8" evidence="3">
    <location>
        <begin position="832"/>
        <end position="840"/>
    </location>
</feature>
<feature type="short sequence motif" description="LFa 9" evidence="3">
    <location>
        <begin position="849"/>
        <end position="855"/>
    </location>
</feature>
<feature type="short sequence motif" description="LFa 10" evidence="3">
    <location>
        <begin position="871"/>
        <end position="881"/>
    </location>
</feature>
<feature type="short sequence motif" description="LFa 11" evidence="3">
    <location>
        <begin position="1117"/>
        <end position="1124"/>
    </location>
</feature>
<feature type="short sequence motif" description="LFa 12" evidence="3">
    <location>
        <begin position="1157"/>
        <end position="1171"/>
    </location>
</feature>
<feature type="short sequence motif" description="LFa 13" evidence="3">
    <location>
        <begin position="1187"/>
        <end position="1195"/>
    </location>
</feature>
<feature type="short sequence motif" description="LFa 14" evidence="3">
    <location>
        <begin position="1220"/>
        <end position="1226"/>
    </location>
</feature>
<feature type="short sequence motif" description="LFa 15" evidence="3">
    <location>
        <begin position="1249"/>
        <end position="1257"/>
    </location>
</feature>
<feature type="short sequence motif" description="LFa 16" evidence="3">
    <location>
        <begin position="1277"/>
        <end position="1286"/>
    </location>
</feature>
<feature type="short sequence motif" description="LFa 17" evidence="3">
    <location>
        <begin position="1317"/>
        <end position="1325"/>
    </location>
</feature>
<feature type="compositionally biased region" description="Low complexity" evidence="4">
    <location>
        <begin position="201"/>
        <end position="213"/>
    </location>
</feature>
<feature type="compositionally biased region" description="Acidic residues" evidence="4">
    <location>
        <begin position="219"/>
        <end position="231"/>
    </location>
</feature>
<feature type="compositionally biased region" description="Acidic residues" evidence="4">
    <location>
        <begin position="248"/>
        <end position="273"/>
    </location>
</feature>
<feature type="compositionally biased region" description="Basic and acidic residues" evidence="4">
    <location>
        <begin position="288"/>
        <end position="323"/>
    </location>
</feature>
<feature type="compositionally biased region" description="Acidic residues" evidence="4">
    <location>
        <begin position="441"/>
        <end position="453"/>
    </location>
</feature>
<feature type="compositionally biased region" description="Polar residues" evidence="4">
    <location>
        <begin position="508"/>
        <end position="528"/>
    </location>
</feature>
<feature type="compositionally biased region" description="Low complexity" evidence="4">
    <location>
        <begin position="539"/>
        <end position="556"/>
    </location>
</feature>
<feature type="compositionally biased region" description="Polar residues" evidence="4">
    <location>
        <begin position="582"/>
        <end position="592"/>
    </location>
</feature>
<feature type="compositionally biased region" description="Basic and acidic residues" evidence="4">
    <location>
        <begin position="627"/>
        <end position="638"/>
    </location>
</feature>
<feature type="compositionally biased region" description="Polar residues" evidence="4">
    <location>
        <begin position="690"/>
        <end position="699"/>
    </location>
</feature>
<feature type="compositionally biased region" description="Acidic residues" evidence="4">
    <location>
        <begin position="797"/>
        <end position="808"/>
    </location>
</feature>
<feature type="compositionally biased region" description="Basic and acidic residues" evidence="4">
    <location>
        <begin position="894"/>
        <end position="919"/>
    </location>
</feature>
<feature type="compositionally biased region" description="Basic residues" evidence="4">
    <location>
        <begin position="1016"/>
        <end position="1034"/>
    </location>
</feature>
<feature type="compositionally biased region" description="Basic and acidic residues" evidence="4">
    <location>
        <begin position="1196"/>
        <end position="1210"/>
    </location>
</feature>
<feature type="modified residue" description="Phosphoserine" evidence="7">
    <location>
        <position position="157"/>
    </location>
</feature>
<feature type="modified residue" description="Phosphoserine" evidence="7">
    <location>
        <position position="159"/>
    </location>
</feature>
<feature type="modified residue" description="Phosphoserine" evidence="7">
    <location>
        <position position="204"/>
    </location>
</feature>
<feature type="modified residue" description="Phosphoserine" evidence="7">
    <location>
        <position position="205"/>
    </location>
</feature>
<feature type="modified residue" description="Phosphoserine" evidence="7">
    <location>
        <position position="209"/>
    </location>
</feature>
<feature type="modified residue" description="Phosphoserine" evidence="2">
    <location>
        <position position="283"/>
    </location>
</feature>
<feature type="modified residue" description="Phosphothreonine" evidence="2">
    <location>
        <position position="321"/>
    </location>
</feature>
<feature type="modified residue" description="Phosphoserine" evidence="7">
    <location>
        <position position="384"/>
    </location>
</feature>
<feature type="modified residue" description="Phosphoserine" evidence="7">
    <location>
        <position position="387"/>
    </location>
</feature>
<feature type="modified residue" description="Phosphoserine" evidence="7">
    <location>
        <position position="531"/>
    </location>
</feature>
<feature type="modified residue" description="Phosphoserine" evidence="7">
    <location>
        <position position="536"/>
    </location>
</feature>
<feature type="modified residue" description="Phosphoserine" evidence="7">
    <location>
        <position position="610"/>
    </location>
</feature>
<feature type="modified residue" description="Phosphoserine" evidence="7">
    <location>
        <position position="611"/>
    </location>
</feature>
<feature type="modified residue" description="Phosphoserine" evidence="7">
    <location>
        <position position="720"/>
    </location>
</feature>
<feature type="modified residue" description="Phosphoserine" evidence="7">
    <location>
        <position position="744"/>
    </location>
</feature>
<feature type="modified residue" description="Phosphoserine" evidence="2">
    <location>
        <position position="749"/>
    </location>
</feature>
<feature type="modified residue" description="Phosphoserine" evidence="7">
    <location>
        <position position="780"/>
    </location>
</feature>
<feature type="modified residue" description="Phosphoserine" evidence="2">
    <location>
        <position position="795"/>
    </location>
</feature>
<feature type="modified residue" description="Phosphoserine" evidence="2">
    <location>
        <position position="867"/>
    </location>
</feature>
<feature type="modified residue" description="Phosphoserine" evidence="2">
    <location>
        <position position="870"/>
    </location>
</feature>
<feature type="modified residue" description="Phosphoserine" evidence="1">
    <location>
        <position position="1042"/>
    </location>
</feature>
<feature type="modified residue" description="Phosphoserine" evidence="7">
    <location>
        <position position="1060"/>
    </location>
</feature>
<feature type="modified residue" description="Phosphoserine" evidence="1">
    <location>
        <position position="1077"/>
    </location>
</feature>
<feature type="modified residue" description="Phosphoserine" evidence="1">
    <location>
        <position position="1102"/>
    </location>
</feature>
<feature type="modified residue" description="Phosphoserine" evidence="2">
    <location>
        <position position="1162"/>
    </location>
</feature>
<feature type="modified residue" description="Phosphoserine" evidence="2">
    <location>
        <position position="1165"/>
    </location>
</feature>
<feature type="modified residue" description="Phosphoserine" evidence="2">
    <location>
        <position position="1327"/>
    </location>
</feature>